<comment type="function">
    <text evidence="1 2">Phosphoinositide-binding protein required for multivesicular body formation. Specifically binds phosphatidylinositol 3-phosphate (PtdIns(P3)). Can also bind phosphatidylinositol 4-phosphate (PtdIns(P4)), phosphatidylinositol 5-phosphate (PtdIns(P5)) and phosphatidylinositol 3,5-biphosphate (PtdIns(3,5)P2). Plays a role in protein transport between cellular compartments. Together with RAB7A facilitates endosome membrane association of the retromer cargo-selective subcomplex (CSC). May act in part as component of the SNX3-retromer complex which mediates the retrograde endosome-to-TGN transport of WLS distinct from the SNX-BAR retromer pathway. Promotes stability and cell surface expression of epithelial sodium channel (ENAC) subunits SCNN1A and SCNN1G. Not involved in EGFR degradation. Involved in the regulation of phagocytosis in dendritic cells possibly by regulating EEA1 recruitment to the nascent phagosomes. Involved in iron homeostasis through regulation of endocytic recycling of the transferrin receptor Tfrc presuambly by delivering the transferrin:transferrin receptor complex to recycling endosomes; the function may involve the CSC retromer subcomplex. Involved in regulation of neurite outgrowth in primary neurons.</text>
</comment>
<comment type="subunit">
    <text evidence="1 2">Interacts with VPS26A, VPS29 and VPS35; the interaction with VPS35 is direct. The association with the retromer CSC subcomplex subunits is proposed to represent a functional distinct retromer variant described as SNX3-retromer complex. Interacts with USP10 and SCNN1A. Interacts with TRFC. Interacts with SNX8; 2 molecules of SNX8 seems to associate with one molecule of SNX3. Interacts with PTPRU (By similarity). Interacts with MON2 and DOP1B.</text>
</comment>
<comment type="subcellular location">
    <subcellularLocation>
        <location evidence="1 2">Early endosome</location>
    </subcellularLocation>
    <subcellularLocation>
        <location evidence="1">Cytoplasmic vesicle</location>
        <location evidence="1">Phagosome</location>
    </subcellularLocation>
    <text evidence="1 2">Colocalizes to clathrin-coated endosomal vesicles morphologically distinct from retromer-decorated non-branched endosomal tubule structures. Colocalizes with EEA1 on nascent phagosomes in dendritic cells but competes with EEA1 for binding to phagosomal membrane (By similarity).</text>
</comment>
<comment type="domain">
    <text evidence="1">The PX domain mediates specific binding to phosphatidylinositol 3-phosphate (PtdIns(P3)).</text>
</comment>
<comment type="PTM">
    <text evidence="2">Ubiquitinated, leading to its proteasomal degradation. Deubiquitinated by USP10 (By similarity).</text>
</comment>
<comment type="similarity">
    <text evidence="5">Belongs to the sorting nexin family.</text>
</comment>
<keyword id="KW-0007">Acetylation</keyword>
<keyword id="KW-0968">Cytoplasmic vesicle</keyword>
<keyword id="KW-0967">Endosome</keyword>
<keyword id="KW-1017">Isopeptide bond</keyword>
<keyword id="KW-0446">Lipid-binding</keyword>
<keyword id="KW-0488">Methylation</keyword>
<keyword id="KW-0597">Phosphoprotein</keyword>
<keyword id="KW-0653">Protein transport</keyword>
<keyword id="KW-1185">Reference proteome</keyword>
<keyword id="KW-0813">Transport</keyword>
<keyword id="KW-0832">Ubl conjugation</keyword>
<gene>
    <name type="primary">SNX3</name>
</gene>
<reference key="1">
    <citation type="submission" date="2004-11" db="EMBL/GenBank/DDBJ databases">
        <authorList>
            <consortium name="The German cDNA consortium"/>
        </authorList>
    </citation>
    <scope>NUCLEOTIDE SEQUENCE [LARGE SCALE MRNA]</scope>
    <source>
        <tissue>Brain cortex</tissue>
    </source>
</reference>
<organism>
    <name type="scientific">Pongo abelii</name>
    <name type="common">Sumatran orangutan</name>
    <name type="synonym">Pongo pygmaeus abelii</name>
    <dbReference type="NCBI Taxonomy" id="9601"/>
    <lineage>
        <taxon>Eukaryota</taxon>
        <taxon>Metazoa</taxon>
        <taxon>Chordata</taxon>
        <taxon>Craniata</taxon>
        <taxon>Vertebrata</taxon>
        <taxon>Euteleostomi</taxon>
        <taxon>Mammalia</taxon>
        <taxon>Eutheria</taxon>
        <taxon>Euarchontoglires</taxon>
        <taxon>Primates</taxon>
        <taxon>Haplorrhini</taxon>
        <taxon>Catarrhini</taxon>
        <taxon>Hominidae</taxon>
        <taxon>Pongo</taxon>
    </lineage>
</organism>
<sequence length="162" mass="18762">MAETVADTRRLITKPQNLNDAYGPPSNFLEIDVSNPQTVGVGRGRFTTYEIRVKTNLPIFKLKESTVRRRYSDFEWLRSELERESKVVVPPLPGKAFLRQLPFRGDDGIFDDNFIEERKQGLEQFINKVAGHPLAQNERCLHMFLQDEIIDKSYTPSKIRHA</sequence>
<evidence type="ECO:0000250" key="1">
    <source>
        <dbReference type="UniProtKB" id="O60493"/>
    </source>
</evidence>
<evidence type="ECO:0000250" key="2">
    <source>
        <dbReference type="UniProtKB" id="O70492"/>
    </source>
</evidence>
<evidence type="ECO:0000250" key="3">
    <source>
        <dbReference type="UniProtKB" id="Q96L94"/>
    </source>
</evidence>
<evidence type="ECO:0000255" key="4">
    <source>
        <dbReference type="PROSITE-ProRule" id="PRU00147"/>
    </source>
</evidence>
<evidence type="ECO:0000305" key="5"/>
<name>SNX3_PONAB</name>
<accession>Q5R5V1</accession>
<feature type="initiator methionine" description="Removed" evidence="1">
    <location>
        <position position="1"/>
    </location>
</feature>
<feature type="chain" id="PRO_0000236196" description="Sorting nexin-3">
    <location>
        <begin position="2"/>
        <end position="162"/>
    </location>
</feature>
<feature type="domain" description="PX" evidence="4">
    <location>
        <begin position="27"/>
        <end position="151"/>
    </location>
</feature>
<feature type="region of interest" description="Binds predominantly to PtdIns(P5) and weaker to PtdIns(P3) abd PtdIns(P4); involved in neurite outgrowth regulation" evidence="2">
    <location>
        <begin position="147"/>
        <end position="162"/>
    </location>
</feature>
<feature type="binding site" evidence="3">
    <location>
        <position position="70"/>
    </location>
    <ligand>
        <name>a 1,2-diacyl-sn-glycero-3-phospho-(1D-myo-inositol-3-phosphate)</name>
        <dbReference type="ChEBI" id="CHEBI:58088"/>
    </ligand>
</feature>
<feature type="binding site" evidence="3">
    <location>
        <position position="72"/>
    </location>
    <ligand>
        <name>a 1,2-diacyl-sn-glycero-3-phospho-(1D-myo-inositol-3-phosphate)</name>
        <dbReference type="ChEBI" id="CHEBI:58088"/>
    </ligand>
</feature>
<feature type="binding site" evidence="3">
    <location>
        <position position="95"/>
    </location>
    <ligand>
        <name>a 1,2-diacyl-sn-glycero-3-phospho-(1D-myo-inositol-3-phosphate)</name>
        <dbReference type="ChEBI" id="CHEBI:58088"/>
    </ligand>
</feature>
<feature type="binding site" evidence="3">
    <location>
        <position position="118"/>
    </location>
    <ligand>
        <name>a 1,2-diacyl-sn-glycero-3-phospho-(1D-myo-inositol-3-phosphate)</name>
        <dbReference type="ChEBI" id="CHEBI:58088"/>
    </ligand>
</feature>
<feature type="modified residue" description="N-acetylalanine" evidence="1">
    <location>
        <position position="2"/>
    </location>
</feature>
<feature type="modified residue" description="Omega-N-methylarginine" evidence="1">
    <location>
        <position position="43"/>
    </location>
</feature>
<feature type="modified residue" description="Phosphoserine" evidence="1">
    <location>
        <position position="72"/>
    </location>
</feature>
<feature type="cross-link" description="Glycyl lysine isopeptide (Lys-Gly) (interchain with G-Cter in SUMO2)" evidence="1">
    <location>
        <position position="95"/>
    </location>
</feature>
<dbReference type="EMBL" id="CR860752">
    <property type="protein sequence ID" value="CAH92865.1"/>
    <property type="molecule type" value="mRNA"/>
</dbReference>
<dbReference type="RefSeq" id="NP_001126677.1">
    <property type="nucleotide sequence ID" value="NM_001133205.1"/>
</dbReference>
<dbReference type="SMR" id="Q5R5V1"/>
<dbReference type="FunCoup" id="Q5R5V1">
    <property type="interactions" value="2664"/>
</dbReference>
<dbReference type="STRING" id="9601.ENSPPYP00000018915"/>
<dbReference type="Ensembl" id="ENSPPYT00000019661.3">
    <property type="protein sequence ID" value="ENSPPYP00000018915.2"/>
    <property type="gene ID" value="ENSPPYG00000016894.3"/>
</dbReference>
<dbReference type="GeneID" id="100173677"/>
<dbReference type="KEGG" id="pon:100173677"/>
<dbReference type="CTD" id="8724"/>
<dbReference type="eggNOG" id="KOG2527">
    <property type="taxonomic scope" value="Eukaryota"/>
</dbReference>
<dbReference type="GeneTree" id="ENSGT00940000153609"/>
<dbReference type="HOGENOM" id="CLU_057172_2_2_1"/>
<dbReference type="InParanoid" id="Q5R5V1"/>
<dbReference type="OMA" id="VGRQRYT"/>
<dbReference type="OrthoDB" id="5227681at2759"/>
<dbReference type="TreeFam" id="TF314980"/>
<dbReference type="Proteomes" id="UP000001595">
    <property type="component" value="Chromosome 6"/>
</dbReference>
<dbReference type="GO" id="GO:0030136">
    <property type="term" value="C:clathrin-coated vesicle"/>
    <property type="evidence" value="ECO:0000250"/>
    <property type="project" value="UniProtKB"/>
</dbReference>
<dbReference type="GO" id="GO:0005829">
    <property type="term" value="C:cytosol"/>
    <property type="evidence" value="ECO:0007669"/>
    <property type="project" value="Ensembl"/>
</dbReference>
<dbReference type="GO" id="GO:0005769">
    <property type="term" value="C:early endosome"/>
    <property type="evidence" value="ECO:0000250"/>
    <property type="project" value="UniProtKB"/>
</dbReference>
<dbReference type="GO" id="GO:0031901">
    <property type="term" value="C:early endosome membrane"/>
    <property type="evidence" value="ECO:0007669"/>
    <property type="project" value="Ensembl"/>
</dbReference>
<dbReference type="GO" id="GO:0032009">
    <property type="term" value="C:early phagosome"/>
    <property type="evidence" value="ECO:0000250"/>
    <property type="project" value="UniProtKB"/>
</dbReference>
<dbReference type="GO" id="GO:0010008">
    <property type="term" value="C:endosome membrane"/>
    <property type="evidence" value="ECO:0000250"/>
    <property type="project" value="UniProtKB"/>
</dbReference>
<dbReference type="GO" id="GO:0030904">
    <property type="term" value="C:retromer complex"/>
    <property type="evidence" value="ECO:0007669"/>
    <property type="project" value="Ensembl"/>
</dbReference>
<dbReference type="GO" id="GO:0080025">
    <property type="term" value="F:phosphatidylinositol-3,5-bisphosphate binding"/>
    <property type="evidence" value="ECO:0000250"/>
    <property type="project" value="UniProtKB"/>
</dbReference>
<dbReference type="GO" id="GO:0032266">
    <property type="term" value="F:phosphatidylinositol-3-phosphate binding"/>
    <property type="evidence" value="ECO:0000250"/>
    <property type="project" value="UniProtKB"/>
</dbReference>
<dbReference type="GO" id="GO:0070273">
    <property type="term" value="F:phosphatidylinositol-4-phosphate binding"/>
    <property type="evidence" value="ECO:0000250"/>
    <property type="project" value="UniProtKB"/>
</dbReference>
<dbReference type="GO" id="GO:0010314">
    <property type="term" value="F:phosphatidylinositol-5-phosphate binding"/>
    <property type="evidence" value="ECO:0000250"/>
    <property type="project" value="UniProtKB"/>
</dbReference>
<dbReference type="GO" id="GO:0019903">
    <property type="term" value="F:protein phosphatase binding"/>
    <property type="evidence" value="ECO:0007669"/>
    <property type="project" value="Ensembl"/>
</dbReference>
<dbReference type="GO" id="GO:1905394">
    <property type="term" value="F:retromer complex binding"/>
    <property type="evidence" value="ECO:0000250"/>
    <property type="project" value="UniProtKB"/>
</dbReference>
<dbReference type="GO" id="GO:0032456">
    <property type="term" value="P:endocytic recycling"/>
    <property type="evidence" value="ECO:0007669"/>
    <property type="project" value="TreeGrafter"/>
</dbReference>
<dbReference type="GO" id="GO:0046597">
    <property type="term" value="P:host-mediated suppression of symbiont invasion"/>
    <property type="evidence" value="ECO:0007669"/>
    <property type="project" value="Ensembl"/>
</dbReference>
<dbReference type="GO" id="GO:0070676">
    <property type="term" value="P:intralumenal vesicle formation"/>
    <property type="evidence" value="ECO:0007669"/>
    <property type="project" value="Ensembl"/>
</dbReference>
<dbReference type="GO" id="GO:0034499">
    <property type="term" value="P:late endosome to Golgi transport"/>
    <property type="evidence" value="ECO:0007669"/>
    <property type="project" value="TreeGrafter"/>
</dbReference>
<dbReference type="GO" id="GO:0010324">
    <property type="term" value="P:membrane invagination"/>
    <property type="evidence" value="ECO:0007669"/>
    <property type="project" value="Ensembl"/>
</dbReference>
<dbReference type="GO" id="GO:2000642">
    <property type="term" value="P:negative regulation of early endosome to late endosome transport"/>
    <property type="evidence" value="ECO:0007669"/>
    <property type="project" value="Ensembl"/>
</dbReference>
<dbReference type="GO" id="GO:0050765">
    <property type="term" value="P:negative regulation of phagocytosis"/>
    <property type="evidence" value="ECO:0000250"/>
    <property type="project" value="UniProtKB"/>
</dbReference>
<dbReference type="GO" id="GO:0042177">
    <property type="term" value="P:negative regulation of protein catabolic process"/>
    <property type="evidence" value="ECO:0007669"/>
    <property type="project" value="Ensembl"/>
</dbReference>
<dbReference type="GO" id="GO:0051224">
    <property type="term" value="P:negative regulation of protein transport"/>
    <property type="evidence" value="ECO:0007669"/>
    <property type="project" value="Ensembl"/>
</dbReference>
<dbReference type="GO" id="GO:0010976">
    <property type="term" value="P:positive regulation of neuron projection development"/>
    <property type="evidence" value="ECO:0000250"/>
    <property type="project" value="UniProtKB"/>
</dbReference>
<dbReference type="GO" id="GO:0022615">
    <property type="term" value="P:protein to membrane docking"/>
    <property type="evidence" value="ECO:0000250"/>
    <property type="project" value="UniProtKB"/>
</dbReference>
<dbReference type="GO" id="GO:0015031">
    <property type="term" value="P:protein transport"/>
    <property type="evidence" value="ECO:0007669"/>
    <property type="project" value="UniProtKB-KW"/>
</dbReference>
<dbReference type="GO" id="GO:0030111">
    <property type="term" value="P:regulation of Wnt signaling pathway"/>
    <property type="evidence" value="ECO:0000250"/>
    <property type="project" value="UniProtKB"/>
</dbReference>
<dbReference type="GO" id="GO:0009617">
    <property type="term" value="P:response to bacterium"/>
    <property type="evidence" value="ECO:0007669"/>
    <property type="project" value="Ensembl"/>
</dbReference>
<dbReference type="CDD" id="cd07293">
    <property type="entry name" value="PX_SNX3"/>
    <property type="match status" value="1"/>
</dbReference>
<dbReference type="FunFam" id="3.30.1520.10:FF:000002">
    <property type="entry name" value="Sorting nexin 12"/>
    <property type="match status" value="1"/>
</dbReference>
<dbReference type="Gene3D" id="3.30.1520.10">
    <property type="entry name" value="Phox-like domain"/>
    <property type="match status" value="1"/>
</dbReference>
<dbReference type="InterPro" id="IPR001683">
    <property type="entry name" value="PX_dom"/>
</dbReference>
<dbReference type="InterPro" id="IPR036871">
    <property type="entry name" value="PX_dom_sf"/>
</dbReference>
<dbReference type="InterPro" id="IPR042137">
    <property type="entry name" value="PX_SNX3_Vert"/>
</dbReference>
<dbReference type="InterPro" id="IPR051074">
    <property type="entry name" value="Sorting_Nexin"/>
</dbReference>
<dbReference type="PANTHER" id="PTHR45963">
    <property type="entry name" value="RE52028P"/>
    <property type="match status" value="1"/>
</dbReference>
<dbReference type="PANTHER" id="PTHR45963:SF1">
    <property type="entry name" value="SORTING NEXIN-3"/>
    <property type="match status" value="1"/>
</dbReference>
<dbReference type="Pfam" id="PF00787">
    <property type="entry name" value="PX"/>
    <property type="match status" value="1"/>
</dbReference>
<dbReference type="SMART" id="SM00312">
    <property type="entry name" value="PX"/>
    <property type="match status" value="1"/>
</dbReference>
<dbReference type="SUPFAM" id="SSF64268">
    <property type="entry name" value="PX domain"/>
    <property type="match status" value="1"/>
</dbReference>
<dbReference type="PROSITE" id="PS50195">
    <property type="entry name" value="PX"/>
    <property type="match status" value="1"/>
</dbReference>
<proteinExistence type="evidence at transcript level"/>
<protein>
    <recommendedName>
        <fullName>Sorting nexin-3</fullName>
    </recommendedName>
</protein>